<evidence type="ECO:0000255" key="1">
    <source>
        <dbReference type="HAMAP-Rule" id="MF_00178"/>
    </source>
</evidence>
<reference key="1">
    <citation type="submission" date="2007-10" db="EMBL/GenBank/DDBJ databases">
        <title>Genome sequence of Campylobacter concisus 13826 isolated from human feces.</title>
        <authorList>
            <person name="Fouts D.E."/>
            <person name="Mongodin E.F."/>
            <person name="Puiu D."/>
            <person name="Sebastian Y."/>
            <person name="Miller W.G."/>
            <person name="Mandrell R.E."/>
            <person name="On S."/>
            <person name="Nelson K.E."/>
        </authorList>
    </citation>
    <scope>NUCLEOTIDE SEQUENCE [LARGE SCALE GENOMIC DNA]</scope>
    <source>
        <strain>13826</strain>
    </source>
</reference>
<comment type="function">
    <text evidence="1">Catalyzes the formation of 6,7-dimethyl-8-ribityllumazine by condensation of 5-amino-6-(D-ribitylamino)uracil with 3,4-dihydroxy-2-butanone 4-phosphate. This is the penultimate step in the biosynthesis of riboflavin.</text>
</comment>
<comment type="catalytic activity">
    <reaction evidence="1">
        <text>(2S)-2-hydroxy-3-oxobutyl phosphate + 5-amino-6-(D-ribitylamino)uracil = 6,7-dimethyl-8-(1-D-ribityl)lumazine + phosphate + 2 H2O + H(+)</text>
        <dbReference type="Rhea" id="RHEA:26152"/>
        <dbReference type="ChEBI" id="CHEBI:15377"/>
        <dbReference type="ChEBI" id="CHEBI:15378"/>
        <dbReference type="ChEBI" id="CHEBI:15934"/>
        <dbReference type="ChEBI" id="CHEBI:43474"/>
        <dbReference type="ChEBI" id="CHEBI:58201"/>
        <dbReference type="ChEBI" id="CHEBI:58830"/>
        <dbReference type="EC" id="2.5.1.78"/>
    </reaction>
</comment>
<comment type="pathway">
    <text evidence="1">Cofactor biosynthesis; riboflavin biosynthesis; riboflavin from 2-hydroxy-3-oxobutyl phosphate and 5-amino-6-(D-ribitylamino)uracil: step 1/2.</text>
</comment>
<comment type="similarity">
    <text evidence="1">Belongs to the DMRL synthase family.</text>
</comment>
<gene>
    <name evidence="1" type="primary">ribH</name>
    <name type="ordered locus">Ccon26_03240</name>
    <name type="ORF">CCC13826_0783</name>
</gene>
<proteinExistence type="inferred from homology"/>
<sequence>MKIIEGNLALKGNEKIAIINARFNHIITDRLVEGAKDAFLRHGGDEKNLTLVLVPGAFEIPMALEKVLASGKFDAVCCVGAVIRGATPHFDYVSAETTKGIANVTLKYAKPVTFGVLTVDSIEQAIERAGSKAGNKGFEAMTGVIEMLNLYKKLGE</sequence>
<feature type="chain" id="PRO_1000071643" description="6,7-dimethyl-8-ribityllumazine synthase">
    <location>
        <begin position="1"/>
        <end position="156"/>
    </location>
</feature>
<feature type="active site" description="Proton donor" evidence="1">
    <location>
        <position position="89"/>
    </location>
</feature>
<feature type="binding site" evidence="1">
    <location>
        <position position="23"/>
    </location>
    <ligand>
        <name>5-amino-6-(D-ribitylamino)uracil</name>
        <dbReference type="ChEBI" id="CHEBI:15934"/>
    </ligand>
</feature>
<feature type="binding site" evidence="1">
    <location>
        <begin position="57"/>
        <end position="59"/>
    </location>
    <ligand>
        <name>5-amino-6-(D-ribitylamino)uracil</name>
        <dbReference type="ChEBI" id="CHEBI:15934"/>
    </ligand>
</feature>
<feature type="binding site" evidence="1">
    <location>
        <begin position="81"/>
        <end position="83"/>
    </location>
    <ligand>
        <name>5-amino-6-(D-ribitylamino)uracil</name>
        <dbReference type="ChEBI" id="CHEBI:15934"/>
    </ligand>
</feature>
<feature type="binding site" evidence="1">
    <location>
        <begin position="86"/>
        <end position="87"/>
    </location>
    <ligand>
        <name>(2S)-2-hydroxy-3-oxobutyl phosphate</name>
        <dbReference type="ChEBI" id="CHEBI:58830"/>
    </ligand>
</feature>
<feature type="binding site" evidence="1">
    <location>
        <position position="114"/>
    </location>
    <ligand>
        <name>5-amino-6-(D-ribitylamino)uracil</name>
        <dbReference type="ChEBI" id="CHEBI:15934"/>
    </ligand>
</feature>
<feature type="binding site" evidence="1">
    <location>
        <position position="128"/>
    </location>
    <ligand>
        <name>(2S)-2-hydroxy-3-oxobutyl phosphate</name>
        <dbReference type="ChEBI" id="CHEBI:58830"/>
    </ligand>
</feature>
<keyword id="KW-0686">Riboflavin biosynthesis</keyword>
<keyword id="KW-0808">Transferase</keyword>
<accession>A7ZBS6</accession>
<protein>
    <recommendedName>
        <fullName evidence="1">6,7-dimethyl-8-ribityllumazine synthase</fullName>
        <shortName evidence="1">DMRL synthase</shortName>
        <shortName evidence="1">LS</shortName>
        <shortName evidence="1">Lumazine synthase</shortName>
        <ecNumber evidence="1">2.5.1.78</ecNumber>
    </recommendedName>
</protein>
<name>RISB_CAMC1</name>
<organism>
    <name type="scientific">Campylobacter concisus (strain 13826)</name>
    <dbReference type="NCBI Taxonomy" id="360104"/>
    <lineage>
        <taxon>Bacteria</taxon>
        <taxon>Pseudomonadati</taxon>
        <taxon>Campylobacterota</taxon>
        <taxon>Epsilonproteobacteria</taxon>
        <taxon>Campylobacterales</taxon>
        <taxon>Campylobacteraceae</taxon>
        <taxon>Campylobacter</taxon>
    </lineage>
</organism>
<dbReference type="EC" id="2.5.1.78" evidence="1"/>
<dbReference type="EMBL" id="CP000792">
    <property type="protein sequence ID" value="EAT98863.1"/>
    <property type="molecule type" value="Genomic_DNA"/>
</dbReference>
<dbReference type="RefSeq" id="WP_012001235.1">
    <property type="nucleotide sequence ID" value="NC_009802.2"/>
</dbReference>
<dbReference type="SMR" id="A7ZBS6"/>
<dbReference type="STRING" id="360104.CCC13826_0783"/>
<dbReference type="KEGG" id="cco:CCC13826_0783"/>
<dbReference type="eggNOG" id="COG0054">
    <property type="taxonomic scope" value="Bacteria"/>
</dbReference>
<dbReference type="HOGENOM" id="CLU_089358_1_1_7"/>
<dbReference type="OrthoDB" id="9809709at2"/>
<dbReference type="UniPathway" id="UPA00275">
    <property type="reaction ID" value="UER00404"/>
</dbReference>
<dbReference type="Proteomes" id="UP000001121">
    <property type="component" value="Chromosome"/>
</dbReference>
<dbReference type="GO" id="GO:0005829">
    <property type="term" value="C:cytosol"/>
    <property type="evidence" value="ECO:0007669"/>
    <property type="project" value="TreeGrafter"/>
</dbReference>
<dbReference type="GO" id="GO:0009349">
    <property type="term" value="C:riboflavin synthase complex"/>
    <property type="evidence" value="ECO:0007669"/>
    <property type="project" value="InterPro"/>
</dbReference>
<dbReference type="GO" id="GO:0000906">
    <property type="term" value="F:6,7-dimethyl-8-ribityllumazine synthase activity"/>
    <property type="evidence" value="ECO:0007669"/>
    <property type="project" value="UniProtKB-UniRule"/>
</dbReference>
<dbReference type="GO" id="GO:0009231">
    <property type="term" value="P:riboflavin biosynthetic process"/>
    <property type="evidence" value="ECO:0007669"/>
    <property type="project" value="UniProtKB-UniRule"/>
</dbReference>
<dbReference type="CDD" id="cd09209">
    <property type="entry name" value="Lumazine_synthase-I"/>
    <property type="match status" value="1"/>
</dbReference>
<dbReference type="FunFam" id="3.40.50.960:FF:000001">
    <property type="entry name" value="6,7-dimethyl-8-ribityllumazine synthase"/>
    <property type="match status" value="1"/>
</dbReference>
<dbReference type="Gene3D" id="3.40.50.960">
    <property type="entry name" value="Lumazine/riboflavin synthase"/>
    <property type="match status" value="1"/>
</dbReference>
<dbReference type="HAMAP" id="MF_00178">
    <property type="entry name" value="Lumazine_synth"/>
    <property type="match status" value="1"/>
</dbReference>
<dbReference type="InterPro" id="IPR034964">
    <property type="entry name" value="LS"/>
</dbReference>
<dbReference type="InterPro" id="IPR002180">
    <property type="entry name" value="LS/RS"/>
</dbReference>
<dbReference type="InterPro" id="IPR036467">
    <property type="entry name" value="LS/RS_sf"/>
</dbReference>
<dbReference type="NCBIfam" id="TIGR00114">
    <property type="entry name" value="lumazine-synth"/>
    <property type="match status" value="1"/>
</dbReference>
<dbReference type="PANTHER" id="PTHR21058:SF0">
    <property type="entry name" value="6,7-DIMETHYL-8-RIBITYLLUMAZINE SYNTHASE"/>
    <property type="match status" value="1"/>
</dbReference>
<dbReference type="PANTHER" id="PTHR21058">
    <property type="entry name" value="6,7-DIMETHYL-8-RIBITYLLUMAZINE SYNTHASE DMRL SYNTHASE LUMAZINE SYNTHASE"/>
    <property type="match status" value="1"/>
</dbReference>
<dbReference type="Pfam" id="PF00885">
    <property type="entry name" value="DMRL_synthase"/>
    <property type="match status" value="1"/>
</dbReference>
<dbReference type="SUPFAM" id="SSF52121">
    <property type="entry name" value="Lumazine synthase"/>
    <property type="match status" value="1"/>
</dbReference>